<dbReference type="EMBL" id="AY956763">
    <property type="protein sequence ID" value="AAX38250.1"/>
    <property type="status" value="ALT_INIT"/>
    <property type="molecule type" value="mRNA"/>
</dbReference>
<dbReference type="SMR" id="Q58FF8"/>
<dbReference type="FunCoup" id="Q58FF8">
    <property type="interactions" value="438"/>
</dbReference>
<dbReference type="IntAct" id="Q58FF8">
    <property type="interactions" value="60"/>
</dbReference>
<dbReference type="MINT" id="Q58FF8"/>
<dbReference type="ChEMBL" id="CHEMBL4105858"/>
<dbReference type="GlyGen" id="Q58FF8">
    <property type="glycosylation" value="2 sites, 1 O-linked glycan (1 site)"/>
</dbReference>
<dbReference type="iPTMnet" id="Q58FF8"/>
<dbReference type="PhosphoSitePlus" id="Q58FF8"/>
<dbReference type="SwissPalm" id="Q58FF8"/>
<dbReference type="BioMuta" id="HGNC:32537"/>
<dbReference type="DMDM" id="190359598"/>
<dbReference type="jPOST" id="Q58FF8"/>
<dbReference type="MassIVE" id="Q58FF8"/>
<dbReference type="ProteomicsDB" id="62623"/>
<dbReference type="Pumba" id="Q58FF8"/>
<dbReference type="AGR" id="HGNC:32537"/>
<dbReference type="GeneCards" id="HSP90AB2P"/>
<dbReference type="HGNC" id="HGNC:32537">
    <property type="gene designation" value="HSP90AB2P"/>
</dbReference>
<dbReference type="neXtProt" id="NX_Q58FF8"/>
<dbReference type="InParanoid" id="Q58FF8"/>
<dbReference type="PAN-GO" id="Q58FF8">
    <property type="GO annotations" value="10 GO annotations based on evolutionary models"/>
</dbReference>
<dbReference type="PhylomeDB" id="Q58FF8"/>
<dbReference type="PathwayCommons" id="Q58FF8"/>
<dbReference type="SignaLink" id="Q58FF8"/>
<dbReference type="ChiTaRS" id="HSP90AB2P">
    <property type="organism name" value="human"/>
</dbReference>
<dbReference type="Pharos" id="Q58FF8">
    <property type="development level" value="Tdark"/>
</dbReference>
<dbReference type="PRO" id="PR:Q58FF8"/>
<dbReference type="Proteomes" id="UP000005640">
    <property type="component" value="Unplaced"/>
</dbReference>
<dbReference type="RNAct" id="Q58FF8">
    <property type="molecule type" value="protein"/>
</dbReference>
<dbReference type="GO" id="GO:0005829">
    <property type="term" value="C:cytosol"/>
    <property type="evidence" value="ECO:0000318"/>
    <property type="project" value="GO_Central"/>
</dbReference>
<dbReference type="GO" id="GO:0070062">
    <property type="term" value="C:extracellular exosome"/>
    <property type="evidence" value="ECO:0007005"/>
    <property type="project" value="UniProtKB"/>
</dbReference>
<dbReference type="GO" id="GO:0048471">
    <property type="term" value="C:perinuclear region of cytoplasm"/>
    <property type="evidence" value="ECO:0000318"/>
    <property type="project" value="GO_Central"/>
</dbReference>
<dbReference type="GO" id="GO:0005886">
    <property type="term" value="C:plasma membrane"/>
    <property type="evidence" value="ECO:0000318"/>
    <property type="project" value="GO_Central"/>
</dbReference>
<dbReference type="GO" id="GO:0032991">
    <property type="term" value="C:protein-containing complex"/>
    <property type="evidence" value="ECO:0000318"/>
    <property type="project" value="GO_Central"/>
</dbReference>
<dbReference type="GO" id="GO:0005524">
    <property type="term" value="F:ATP binding"/>
    <property type="evidence" value="ECO:0000318"/>
    <property type="project" value="GO_Central"/>
</dbReference>
<dbReference type="GO" id="GO:0016887">
    <property type="term" value="F:ATP hydrolysis activity"/>
    <property type="evidence" value="ECO:0000318"/>
    <property type="project" value="GO_Central"/>
</dbReference>
<dbReference type="GO" id="GO:0140662">
    <property type="term" value="F:ATP-dependent protein folding chaperone"/>
    <property type="evidence" value="ECO:0007669"/>
    <property type="project" value="InterPro"/>
</dbReference>
<dbReference type="GO" id="GO:0051082">
    <property type="term" value="F:unfolded protein binding"/>
    <property type="evidence" value="ECO:0000318"/>
    <property type="project" value="GO_Central"/>
</dbReference>
<dbReference type="GO" id="GO:0034605">
    <property type="term" value="P:cellular response to heat"/>
    <property type="evidence" value="ECO:0000318"/>
    <property type="project" value="GO_Central"/>
</dbReference>
<dbReference type="GO" id="GO:0006457">
    <property type="term" value="P:protein folding"/>
    <property type="evidence" value="ECO:0000318"/>
    <property type="project" value="GO_Central"/>
</dbReference>
<dbReference type="GO" id="GO:0050821">
    <property type="term" value="P:protein stabilization"/>
    <property type="evidence" value="ECO:0000318"/>
    <property type="project" value="GO_Central"/>
</dbReference>
<dbReference type="FunFam" id="3.40.50.11260:FF:000001">
    <property type="entry name" value="Heat shock protein 90 alpha"/>
    <property type="match status" value="1"/>
</dbReference>
<dbReference type="FunFam" id="1.20.120.790:FF:000022">
    <property type="entry name" value="Putative heat shock protein HSP 90-beta 2"/>
    <property type="match status" value="1"/>
</dbReference>
<dbReference type="FunFam" id="3.30.565.10:FF:000108">
    <property type="entry name" value="Putative heat shock protein HSP 90-beta 2"/>
    <property type="match status" value="1"/>
</dbReference>
<dbReference type="Gene3D" id="3.40.50.11260">
    <property type="match status" value="1"/>
</dbReference>
<dbReference type="Gene3D" id="1.20.120.790">
    <property type="entry name" value="Heat shock protein 90, C-terminal domain"/>
    <property type="match status" value="1"/>
</dbReference>
<dbReference type="Gene3D" id="3.30.565.10">
    <property type="entry name" value="Histidine kinase-like ATPase, C-terminal domain"/>
    <property type="match status" value="2"/>
</dbReference>
<dbReference type="InterPro" id="IPR036890">
    <property type="entry name" value="HATPase_C_sf"/>
</dbReference>
<dbReference type="InterPro" id="IPR037196">
    <property type="entry name" value="HSP90_C"/>
</dbReference>
<dbReference type="InterPro" id="IPR001404">
    <property type="entry name" value="Hsp90_fam"/>
</dbReference>
<dbReference type="InterPro" id="IPR020575">
    <property type="entry name" value="Hsp90_N"/>
</dbReference>
<dbReference type="InterPro" id="IPR020568">
    <property type="entry name" value="Ribosomal_Su5_D2-typ_SF"/>
</dbReference>
<dbReference type="PANTHER" id="PTHR11528">
    <property type="entry name" value="HEAT SHOCK PROTEIN 90 FAMILY MEMBER"/>
    <property type="match status" value="1"/>
</dbReference>
<dbReference type="Pfam" id="PF00183">
    <property type="entry name" value="HSP90"/>
    <property type="match status" value="2"/>
</dbReference>
<dbReference type="PRINTS" id="PR00775">
    <property type="entry name" value="HEATSHOCK90"/>
</dbReference>
<dbReference type="SUPFAM" id="SSF55874">
    <property type="entry name" value="ATPase domain of HSP90 chaperone/DNA topoisomerase II/histidine kinase"/>
    <property type="match status" value="1"/>
</dbReference>
<dbReference type="SUPFAM" id="SSF110942">
    <property type="entry name" value="HSP90 C-terminal domain"/>
    <property type="match status" value="1"/>
</dbReference>
<dbReference type="SUPFAM" id="SSF54211">
    <property type="entry name" value="Ribosomal protein S5 domain 2-like"/>
    <property type="match status" value="2"/>
</dbReference>
<accession>Q58FF8</accession>
<reference key="1">
    <citation type="journal article" date="2005" name="Genomics">
        <title>The HSP90 family of genes in the human genome: insights into their divergence and evolution.</title>
        <authorList>
            <person name="Chen B."/>
            <person name="Piel W.H."/>
            <person name="Gui L."/>
            <person name="Bruford E."/>
            <person name="Monteiro A."/>
        </authorList>
    </citation>
    <scope>NUCLEOTIDE SEQUENCE [MRNA]</scope>
    <scope>NOMENCLATURE</scope>
</reference>
<reference key="2">
    <citation type="journal article" date="2006" name="Cell">
        <title>Global, in vivo, and site-specific phosphorylation dynamics in signaling networks.</title>
        <authorList>
            <person name="Olsen J.V."/>
            <person name="Blagoev B."/>
            <person name="Gnad F."/>
            <person name="Macek B."/>
            <person name="Kumar C."/>
            <person name="Mortensen P."/>
            <person name="Mann M."/>
        </authorList>
    </citation>
    <scope>PHOSPHORYLATION [LARGE SCALE ANALYSIS] AT SER-177</scope>
    <scope>IDENTIFICATION BY MASS SPECTROMETRY [LARGE SCALE ANALYSIS]</scope>
    <source>
        <tissue>Cervix carcinoma</tissue>
    </source>
</reference>
<proteinExistence type="evidence at protein level"/>
<feature type="chain" id="PRO_0000340659" description="Putative heat shock protein HSP 90-beta 2">
    <location>
        <begin position="1"/>
        <end position="381"/>
    </location>
</feature>
<feature type="region of interest" description="Disordered" evidence="3">
    <location>
        <begin position="145"/>
        <end position="192"/>
    </location>
</feature>
<feature type="coiled-coil region" evidence="2">
    <location>
        <begin position="315"/>
        <end position="347"/>
    </location>
</feature>
<feature type="compositionally biased region" description="Basic and acidic residues" evidence="3">
    <location>
        <begin position="145"/>
        <end position="174"/>
    </location>
</feature>
<feature type="binding site" evidence="1">
    <location>
        <position position="46"/>
    </location>
    <ligand>
        <name>ATP</name>
        <dbReference type="ChEBI" id="CHEBI:30616"/>
    </ligand>
</feature>
<feature type="binding site" evidence="1">
    <location>
        <position position="88"/>
    </location>
    <ligand>
        <name>ATP</name>
        <dbReference type="ChEBI" id="CHEBI:30616"/>
    </ligand>
</feature>
<feature type="binding site" evidence="1">
    <location>
        <position position="107"/>
    </location>
    <ligand>
        <name>ATP</name>
        <dbReference type="ChEBI" id="CHEBI:30616"/>
    </ligand>
</feature>
<feature type="modified residue" description="Phosphoserine" evidence="5">
    <location>
        <position position="177"/>
    </location>
</feature>
<sequence length="381" mass="44349">MPEEVHLGEKEVETFAFQAEIAQLMSLIINTFYSNKEIFLWELISNASDALDKIRYESLTDPSKLDSGKELKIDIIPNTQEHTLTLVDTGIGMTKADLINNLGTIAKFQDQTEYLEEMQVKEVVEKHSQFLGYPITLYLEKEREKEISDGKAEEEKGEKEEENKDDEEKPKIEDVGSDEEDDSGKDKKKKTKKIKEKYIDQEELNKTKPIWTRNTEDITQEEYGEFYKSLTNDWKDHLAVRYFSVEEYVSRMKEIQKSIYYITGESKEQVANSAFVEQVWKRDSRVVYMTEPIDGYQLKEFDGKSLVSVTKEGLELPEDGEEKKRMEERKAKFENLCKFMKETLDKKVEMVTVSNRLVSSSCCIVTSTYSWTANMEQIMKA</sequence>
<organism>
    <name type="scientific">Homo sapiens</name>
    <name type="common">Human</name>
    <dbReference type="NCBI Taxonomy" id="9606"/>
    <lineage>
        <taxon>Eukaryota</taxon>
        <taxon>Metazoa</taxon>
        <taxon>Chordata</taxon>
        <taxon>Craniata</taxon>
        <taxon>Vertebrata</taxon>
        <taxon>Euteleostomi</taxon>
        <taxon>Mammalia</taxon>
        <taxon>Eutheria</taxon>
        <taxon>Euarchontoglires</taxon>
        <taxon>Primates</taxon>
        <taxon>Haplorrhini</taxon>
        <taxon>Catarrhini</taxon>
        <taxon>Hominidae</taxon>
        <taxon>Homo</taxon>
    </lineage>
</organism>
<keyword id="KW-0067">ATP-binding</keyword>
<keyword id="KW-0143">Chaperone</keyword>
<keyword id="KW-0175">Coiled coil</keyword>
<keyword id="KW-0963">Cytoplasm</keyword>
<keyword id="KW-0547">Nucleotide-binding</keyword>
<keyword id="KW-0597">Phosphoprotein</keyword>
<keyword id="KW-1267">Proteomics identification</keyword>
<keyword id="KW-1185">Reference proteome</keyword>
<keyword id="KW-0346">Stress response</keyword>
<evidence type="ECO:0000250" key="1"/>
<evidence type="ECO:0000255" key="2"/>
<evidence type="ECO:0000256" key="3">
    <source>
        <dbReference type="SAM" id="MobiDB-lite"/>
    </source>
</evidence>
<evidence type="ECO:0000305" key="4"/>
<evidence type="ECO:0007744" key="5">
    <source>
    </source>
</evidence>
<name>H90B2_HUMAN</name>
<protein>
    <recommendedName>
        <fullName>Putative heat shock protein HSP 90-beta 2</fullName>
    </recommendedName>
    <alternativeName>
        <fullName>Heat shock protein 90-beta b</fullName>
        <shortName>Heat shock protein 90Bb</shortName>
    </alternativeName>
</protein>
<gene>
    <name type="primary">HSP90AB2P</name>
    <name type="synonym">HSP90BB</name>
</gene>
<comment type="function">
    <text evidence="1">Putative molecular chaperone that may promote the maturation, structural maintenance and proper regulation of specific target proteins.</text>
</comment>
<comment type="subunit">
    <text evidence="1">Homodimer.</text>
</comment>
<comment type="subcellular location">
    <subcellularLocation>
        <location evidence="1">Cytoplasm</location>
    </subcellularLocation>
</comment>
<comment type="similarity">
    <text evidence="4">Belongs to the heat shock protein 90 family.</text>
</comment>
<comment type="caution">
    <text evidence="4">Despite classification as a pseudogene, the existence of this protein is supported by unambiguous mass spectrometry evidence.</text>
</comment>
<comment type="sequence caution" evidence="4">
    <conflict type="erroneous initiation">
        <sequence resource="EMBL-CDS" id="AAX38250"/>
    </conflict>
</comment>